<gene>
    <name evidence="1" type="primary">cmk</name>
    <name type="ordered locus">NP_4914A</name>
</gene>
<sequence length="192" mass="21385">MLITISGPAGSGKSTVAAGLAESLGYEHVSGGDIFRDLADDRGLTPLELNKRAEEDDQIDRDLDRKQRDIAESRDDIVLESRLAGWMAGEHADFRIWLDAPLSVRAERIADREDKSVELAHNETKERGKSEALRYREYYNIDIEDRSIYDLALNTARLSPDGVRAVVESAVNAYAPDDDEGQTPVEGVTYEF</sequence>
<proteinExistence type="inferred from homology"/>
<comment type="catalytic activity">
    <reaction evidence="1">
        <text>CMP + ATP = CDP + ADP</text>
        <dbReference type="Rhea" id="RHEA:11600"/>
        <dbReference type="ChEBI" id="CHEBI:30616"/>
        <dbReference type="ChEBI" id="CHEBI:58069"/>
        <dbReference type="ChEBI" id="CHEBI:60377"/>
        <dbReference type="ChEBI" id="CHEBI:456216"/>
        <dbReference type="EC" id="2.7.4.25"/>
    </reaction>
</comment>
<comment type="catalytic activity">
    <reaction evidence="1">
        <text>dCMP + ATP = dCDP + ADP</text>
        <dbReference type="Rhea" id="RHEA:25094"/>
        <dbReference type="ChEBI" id="CHEBI:30616"/>
        <dbReference type="ChEBI" id="CHEBI:57566"/>
        <dbReference type="ChEBI" id="CHEBI:58593"/>
        <dbReference type="ChEBI" id="CHEBI:456216"/>
        <dbReference type="EC" id="2.7.4.25"/>
    </reaction>
</comment>
<comment type="subcellular location">
    <subcellularLocation>
        <location evidence="1">Cytoplasm</location>
    </subcellularLocation>
</comment>
<comment type="similarity">
    <text evidence="1">Belongs to the cytidylate kinase family. Type 2 subfamily.</text>
</comment>
<keyword id="KW-0067">ATP-binding</keyword>
<keyword id="KW-0963">Cytoplasm</keyword>
<keyword id="KW-0418">Kinase</keyword>
<keyword id="KW-0547">Nucleotide-binding</keyword>
<keyword id="KW-1185">Reference proteome</keyword>
<keyword id="KW-0808">Transferase</keyword>
<accession>Q3IMV8</accession>
<protein>
    <recommendedName>
        <fullName evidence="1">Cytidylate kinase</fullName>
        <shortName evidence="1">CK</shortName>
        <ecNumber evidence="1">2.7.4.25</ecNumber>
    </recommendedName>
    <alternativeName>
        <fullName evidence="1">Cytidine monophosphate kinase</fullName>
        <shortName evidence="1">CMP kinase</shortName>
    </alternativeName>
</protein>
<organism>
    <name type="scientific">Natronomonas pharaonis (strain ATCC 35678 / DSM 2160 / CIP 103997 / JCM 8858 / NBRC 14720 / NCIMB 2260 / Gabara)</name>
    <name type="common">Halobacterium pharaonis</name>
    <dbReference type="NCBI Taxonomy" id="348780"/>
    <lineage>
        <taxon>Archaea</taxon>
        <taxon>Methanobacteriati</taxon>
        <taxon>Methanobacteriota</taxon>
        <taxon>Stenosarchaea group</taxon>
        <taxon>Halobacteria</taxon>
        <taxon>Halobacteriales</taxon>
        <taxon>Haloarculaceae</taxon>
        <taxon>Natronomonas</taxon>
    </lineage>
</organism>
<dbReference type="EC" id="2.7.4.25" evidence="1"/>
<dbReference type="EMBL" id="CR936257">
    <property type="protein sequence ID" value="CAI50548.1"/>
    <property type="molecule type" value="Genomic_DNA"/>
</dbReference>
<dbReference type="RefSeq" id="WP_011324160.1">
    <property type="nucleotide sequence ID" value="NC_007426.1"/>
</dbReference>
<dbReference type="SMR" id="Q3IMV8"/>
<dbReference type="STRING" id="348780.NP_4914A"/>
<dbReference type="EnsemblBacteria" id="CAI50548">
    <property type="protein sequence ID" value="CAI50548"/>
    <property type="gene ID" value="NP_4914A"/>
</dbReference>
<dbReference type="GeneID" id="3702613"/>
<dbReference type="KEGG" id="nph:NP_4914A"/>
<dbReference type="eggNOG" id="arCOG01037">
    <property type="taxonomic scope" value="Archaea"/>
</dbReference>
<dbReference type="HOGENOM" id="CLU_079959_1_0_2"/>
<dbReference type="OrthoDB" id="31096at2157"/>
<dbReference type="Proteomes" id="UP000002698">
    <property type="component" value="Chromosome"/>
</dbReference>
<dbReference type="GO" id="GO:0005737">
    <property type="term" value="C:cytoplasm"/>
    <property type="evidence" value="ECO:0007669"/>
    <property type="project" value="UniProtKB-SubCell"/>
</dbReference>
<dbReference type="GO" id="GO:0005524">
    <property type="term" value="F:ATP binding"/>
    <property type="evidence" value="ECO:0007669"/>
    <property type="project" value="UniProtKB-UniRule"/>
</dbReference>
<dbReference type="GO" id="GO:0036430">
    <property type="term" value="F:CMP kinase activity"/>
    <property type="evidence" value="ECO:0007669"/>
    <property type="project" value="RHEA"/>
</dbReference>
<dbReference type="GO" id="GO:0036431">
    <property type="term" value="F:dCMP kinase activity"/>
    <property type="evidence" value="ECO:0007669"/>
    <property type="project" value="RHEA"/>
</dbReference>
<dbReference type="GO" id="GO:0006220">
    <property type="term" value="P:pyrimidine nucleotide metabolic process"/>
    <property type="evidence" value="ECO:0007669"/>
    <property type="project" value="UniProtKB-UniRule"/>
</dbReference>
<dbReference type="CDD" id="cd02020">
    <property type="entry name" value="CMPK"/>
    <property type="match status" value="1"/>
</dbReference>
<dbReference type="Gene3D" id="3.40.50.300">
    <property type="entry name" value="P-loop containing nucleotide triphosphate hydrolases"/>
    <property type="match status" value="1"/>
</dbReference>
<dbReference type="HAMAP" id="MF_00239">
    <property type="entry name" value="Cytidyl_kinase_type2"/>
    <property type="match status" value="1"/>
</dbReference>
<dbReference type="InterPro" id="IPR011892">
    <property type="entry name" value="Cyt_kin_arch"/>
</dbReference>
<dbReference type="InterPro" id="IPR011994">
    <property type="entry name" value="Cytidylate_kinase_dom"/>
</dbReference>
<dbReference type="InterPro" id="IPR027417">
    <property type="entry name" value="P-loop_NTPase"/>
</dbReference>
<dbReference type="NCBIfam" id="TIGR02173">
    <property type="entry name" value="cyt_kin_arch"/>
    <property type="match status" value="1"/>
</dbReference>
<dbReference type="Pfam" id="PF13189">
    <property type="entry name" value="Cytidylate_kin2"/>
    <property type="match status" value="1"/>
</dbReference>
<dbReference type="SUPFAM" id="SSF52540">
    <property type="entry name" value="P-loop containing nucleoside triphosphate hydrolases"/>
    <property type="match status" value="1"/>
</dbReference>
<reference key="1">
    <citation type="journal article" date="2005" name="Genome Res.">
        <title>Living with two extremes: conclusions from the genome sequence of Natronomonas pharaonis.</title>
        <authorList>
            <person name="Falb M."/>
            <person name="Pfeiffer F."/>
            <person name="Palm P."/>
            <person name="Rodewald K."/>
            <person name="Hickmann V."/>
            <person name="Tittor J."/>
            <person name="Oesterhelt D."/>
        </authorList>
    </citation>
    <scope>NUCLEOTIDE SEQUENCE [LARGE SCALE GENOMIC DNA]</scope>
    <source>
        <strain>ATCC 35678 / DSM 2160 / CIP 103997 / JCM 8858 / NBRC 14720 / NCIMB 2260 / Gabara</strain>
    </source>
</reference>
<feature type="chain" id="PRO_1000005682" description="Cytidylate kinase">
    <location>
        <begin position="1"/>
        <end position="192"/>
    </location>
</feature>
<feature type="binding site" evidence="1">
    <location>
        <begin position="7"/>
        <end position="15"/>
    </location>
    <ligand>
        <name>ATP</name>
        <dbReference type="ChEBI" id="CHEBI:30616"/>
    </ligand>
</feature>
<evidence type="ECO:0000255" key="1">
    <source>
        <dbReference type="HAMAP-Rule" id="MF_00239"/>
    </source>
</evidence>
<name>KCY_NATPD</name>